<evidence type="ECO:0000255" key="1">
    <source>
        <dbReference type="HAMAP-Rule" id="MF_00176"/>
    </source>
</evidence>
<evidence type="ECO:0000256" key="2">
    <source>
        <dbReference type="SAM" id="MobiDB-lite"/>
    </source>
</evidence>
<name>SYS_TRIEI</name>
<feature type="chain" id="PRO_1000019861" description="Serine--tRNA ligase">
    <location>
        <begin position="1"/>
        <end position="425"/>
    </location>
</feature>
<feature type="region of interest" description="Disordered" evidence="2">
    <location>
        <begin position="41"/>
        <end position="70"/>
    </location>
</feature>
<feature type="compositionally biased region" description="Polar residues" evidence="2">
    <location>
        <begin position="44"/>
        <end position="54"/>
    </location>
</feature>
<feature type="compositionally biased region" description="Basic and acidic residues" evidence="2">
    <location>
        <begin position="57"/>
        <end position="70"/>
    </location>
</feature>
<feature type="binding site" evidence="1">
    <location>
        <begin position="234"/>
        <end position="236"/>
    </location>
    <ligand>
        <name>L-serine</name>
        <dbReference type="ChEBI" id="CHEBI:33384"/>
    </ligand>
</feature>
<feature type="binding site" evidence="1">
    <location>
        <begin position="265"/>
        <end position="267"/>
    </location>
    <ligand>
        <name>ATP</name>
        <dbReference type="ChEBI" id="CHEBI:30616"/>
    </ligand>
</feature>
<feature type="binding site" evidence="1">
    <location>
        <position position="288"/>
    </location>
    <ligand>
        <name>L-serine</name>
        <dbReference type="ChEBI" id="CHEBI:33384"/>
    </ligand>
</feature>
<feature type="binding site" evidence="1">
    <location>
        <begin position="352"/>
        <end position="355"/>
    </location>
    <ligand>
        <name>ATP</name>
        <dbReference type="ChEBI" id="CHEBI:30616"/>
    </ligand>
</feature>
<feature type="binding site" evidence="1">
    <location>
        <position position="388"/>
    </location>
    <ligand>
        <name>L-serine</name>
        <dbReference type="ChEBI" id="CHEBI:33384"/>
    </ligand>
</feature>
<protein>
    <recommendedName>
        <fullName evidence="1">Serine--tRNA ligase</fullName>
        <ecNumber evidence="1">6.1.1.11</ecNumber>
    </recommendedName>
    <alternativeName>
        <fullName evidence="1">Seryl-tRNA synthetase</fullName>
        <shortName evidence="1">SerRS</shortName>
    </alternativeName>
    <alternativeName>
        <fullName evidence="1">Seryl-tRNA(Ser/Sec) synthetase</fullName>
    </alternativeName>
</protein>
<dbReference type="EC" id="6.1.1.11" evidence="1"/>
<dbReference type="EMBL" id="CP000393">
    <property type="protein sequence ID" value="ABG52612.1"/>
    <property type="molecule type" value="Genomic_DNA"/>
</dbReference>
<dbReference type="RefSeq" id="WP_011612954.1">
    <property type="nucleotide sequence ID" value="NC_008312.1"/>
</dbReference>
<dbReference type="SMR" id="Q10YR2"/>
<dbReference type="STRING" id="203124.Tery_3523"/>
<dbReference type="KEGG" id="ter:Tery_3523"/>
<dbReference type="eggNOG" id="COG0172">
    <property type="taxonomic scope" value="Bacteria"/>
</dbReference>
<dbReference type="HOGENOM" id="CLU_023797_1_1_3"/>
<dbReference type="OrthoDB" id="9804647at2"/>
<dbReference type="UniPathway" id="UPA00906">
    <property type="reaction ID" value="UER00895"/>
</dbReference>
<dbReference type="GO" id="GO:0005737">
    <property type="term" value="C:cytoplasm"/>
    <property type="evidence" value="ECO:0007669"/>
    <property type="project" value="UniProtKB-SubCell"/>
</dbReference>
<dbReference type="GO" id="GO:0005524">
    <property type="term" value="F:ATP binding"/>
    <property type="evidence" value="ECO:0007669"/>
    <property type="project" value="UniProtKB-UniRule"/>
</dbReference>
<dbReference type="GO" id="GO:0004828">
    <property type="term" value="F:serine-tRNA ligase activity"/>
    <property type="evidence" value="ECO:0007669"/>
    <property type="project" value="UniProtKB-UniRule"/>
</dbReference>
<dbReference type="GO" id="GO:0016260">
    <property type="term" value="P:selenocysteine biosynthetic process"/>
    <property type="evidence" value="ECO:0007669"/>
    <property type="project" value="UniProtKB-UniRule"/>
</dbReference>
<dbReference type="GO" id="GO:0006434">
    <property type="term" value="P:seryl-tRNA aminoacylation"/>
    <property type="evidence" value="ECO:0007669"/>
    <property type="project" value="UniProtKB-UniRule"/>
</dbReference>
<dbReference type="CDD" id="cd00770">
    <property type="entry name" value="SerRS_core"/>
    <property type="match status" value="1"/>
</dbReference>
<dbReference type="Gene3D" id="3.30.930.10">
    <property type="entry name" value="Bira Bifunctional Protein, Domain 2"/>
    <property type="match status" value="1"/>
</dbReference>
<dbReference type="Gene3D" id="1.10.287.40">
    <property type="entry name" value="Serine-tRNA synthetase, tRNA binding domain"/>
    <property type="match status" value="1"/>
</dbReference>
<dbReference type="HAMAP" id="MF_00176">
    <property type="entry name" value="Ser_tRNA_synth_type1"/>
    <property type="match status" value="1"/>
</dbReference>
<dbReference type="InterPro" id="IPR002314">
    <property type="entry name" value="aa-tRNA-synt_IIb"/>
</dbReference>
<dbReference type="InterPro" id="IPR006195">
    <property type="entry name" value="aa-tRNA-synth_II"/>
</dbReference>
<dbReference type="InterPro" id="IPR045864">
    <property type="entry name" value="aa-tRNA-synth_II/BPL/LPL"/>
</dbReference>
<dbReference type="InterPro" id="IPR002317">
    <property type="entry name" value="Ser-tRNA-ligase_type_1"/>
</dbReference>
<dbReference type="InterPro" id="IPR015866">
    <property type="entry name" value="Ser-tRNA-synth_1_N"/>
</dbReference>
<dbReference type="InterPro" id="IPR042103">
    <property type="entry name" value="SerRS_1_N_sf"/>
</dbReference>
<dbReference type="InterPro" id="IPR033729">
    <property type="entry name" value="SerRS_core"/>
</dbReference>
<dbReference type="InterPro" id="IPR010978">
    <property type="entry name" value="tRNA-bd_arm"/>
</dbReference>
<dbReference type="NCBIfam" id="TIGR00414">
    <property type="entry name" value="serS"/>
    <property type="match status" value="1"/>
</dbReference>
<dbReference type="PANTHER" id="PTHR43697:SF1">
    <property type="entry name" value="SERINE--TRNA LIGASE"/>
    <property type="match status" value="1"/>
</dbReference>
<dbReference type="PANTHER" id="PTHR43697">
    <property type="entry name" value="SERYL-TRNA SYNTHETASE"/>
    <property type="match status" value="1"/>
</dbReference>
<dbReference type="Pfam" id="PF02403">
    <property type="entry name" value="Seryl_tRNA_N"/>
    <property type="match status" value="1"/>
</dbReference>
<dbReference type="Pfam" id="PF00587">
    <property type="entry name" value="tRNA-synt_2b"/>
    <property type="match status" value="1"/>
</dbReference>
<dbReference type="PIRSF" id="PIRSF001529">
    <property type="entry name" value="Ser-tRNA-synth_IIa"/>
    <property type="match status" value="1"/>
</dbReference>
<dbReference type="PRINTS" id="PR00981">
    <property type="entry name" value="TRNASYNTHSER"/>
</dbReference>
<dbReference type="SUPFAM" id="SSF55681">
    <property type="entry name" value="Class II aaRS and biotin synthetases"/>
    <property type="match status" value="1"/>
</dbReference>
<dbReference type="SUPFAM" id="SSF46589">
    <property type="entry name" value="tRNA-binding arm"/>
    <property type="match status" value="1"/>
</dbReference>
<dbReference type="PROSITE" id="PS50862">
    <property type="entry name" value="AA_TRNA_LIGASE_II"/>
    <property type="match status" value="1"/>
</dbReference>
<keyword id="KW-0030">Aminoacyl-tRNA synthetase</keyword>
<keyword id="KW-0067">ATP-binding</keyword>
<keyword id="KW-0963">Cytoplasm</keyword>
<keyword id="KW-0436">Ligase</keyword>
<keyword id="KW-0547">Nucleotide-binding</keyword>
<keyword id="KW-0648">Protein biosynthesis</keyword>
<proteinExistence type="inferred from homology"/>
<comment type="function">
    <text evidence="1">Catalyzes the attachment of serine to tRNA(Ser). Is also able to aminoacylate tRNA(Sec) with serine, to form the misacylated tRNA L-seryl-tRNA(Sec), which will be further converted into selenocysteinyl-tRNA(Sec).</text>
</comment>
<comment type="catalytic activity">
    <reaction evidence="1">
        <text>tRNA(Ser) + L-serine + ATP = L-seryl-tRNA(Ser) + AMP + diphosphate + H(+)</text>
        <dbReference type="Rhea" id="RHEA:12292"/>
        <dbReference type="Rhea" id="RHEA-COMP:9669"/>
        <dbReference type="Rhea" id="RHEA-COMP:9703"/>
        <dbReference type="ChEBI" id="CHEBI:15378"/>
        <dbReference type="ChEBI" id="CHEBI:30616"/>
        <dbReference type="ChEBI" id="CHEBI:33019"/>
        <dbReference type="ChEBI" id="CHEBI:33384"/>
        <dbReference type="ChEBI" id="CHEBI:78442"/>
        <dbReference type="ChEBI" id="CHEBI:78533"/>
        <dbReference type="ChEBI" id="CHEBI:456215"/>
        <dbReference type="EC" id="6.1.1.11"/>
    </reaction>
</comment>
<comment type="catalytic activity">
    <reaction evidence="1">
        <text>tRNA(Sec) + L-serine + ATP = L-seryl-tRNA(Sec) + AMP + diphosphate + H(+)</text>
        <dbReference type="Rhea" id="RHEA:42580"/>
        <dbReference type="Rhea" id="RHEA-COMP:9742"/>
        <dbReference type="Rhea" id="RHEA-COMP:10128"/>
        <dbReference type="ChEBI" id="CHEBI:15378"/>
        <dbReference type="ChEBI" id="CHEBI:30616"/>
        <dbReference type="ChEBI" id="CHEBI:33019"/>
        <dbReference type="ChEBI" id="CHEBI:33384"/>
        <dbReference type="ChEBI" id="CHEBI:78442"/>
        <dbReference type="ChEBI" id="CHEBI:78533"/>
        <dbReference type="ChEBI" id="CHEBI:456215"/>
        <dbReference type="EC" id="6.1.1.11"/>
    </reaction>
</comment>
<comment type="pathway">
    <text evidence="1">Aminoacyl-tRNA biosynthesis; selenocysteinyl-tRNA(Sec) biosynthesis; L-seryl-tRNA(Sec) from L-serine and tRNA(Sec): step 1/1.</text>
</comment>
<comment type="subunit">
    <text evidence="1">Homodimer. The tRNA molecule binds across the dimer.</text>
</comment>
<comment type="subcellular location">
    <subcellularLocation>
        <location evidence="1">Cytoplasm</location>
    </subcellularLocation>
</comment>
<comment type="domain">
    <text evidence="1">Consists of two distinct domains, a catalytic core and a N-terminal extension that is involved in tRNA binding.</text>
</comment>
<comment type="similarity">
    <text evidence="1">Belongs to the class-II aminoacyl-tRNA synthetase family. Type-1 seryl-tRNA synthetase subfamily.</text>
</comment>
<gene>
    <name evidence="1" type="primary">serS</name>
    <name type="ordered locus">Tery_3523</name>
</gene>
<accession>Q10YR2</accession>
<reference key="1">
    <citation type="journal article" date="2015" name="Proc. Natl. Acad. Sci. U.S.A.">
        <title>Trichodesmium genome maintains abundant, widespread noncoding DNA in situ, despite oligotrophic lifestyle.</title>
        <authorList>
            <person name="Walworth N."/>
            <person name="Pfreundt U."/>
            <person name="Nelson W.C."/>
            <person name="Mincer T."/>
            <person name="Heidelberg J.F."/>
            <person name="Fu F."/>
            <person name="Waterbury J.B."/>
            <person name="Glavina del Rio T."/>
            <person name="Goodwin L."/>
            <person name="Kyrpides N.C."/>
            <person name="Land M.L."/>
            <person name="Woyke T."/>
            <person name="Hutchins D.A."/>
            <person name="Hess W.R."/>
            <person name="Webb E.A."/>
        </authorList>
    </citation>
    <scope>NUCLEOTIDE SEQUENCE [LARGE SCALE GENOMIC DNA]</scope>
    <source>
        <strain>IMS101</strain>
    </source>
</reference>
<sequence>MLDIRQIRENPQIVQELLKRRGEYDLQPIIELDEKQRQLETERSQLQARSNQVGKQVGEKIKSGSDPKGTEIKALKEEGNKVKAKLSELEPEEKELKAKIEALLLPLPNLPSESTPIGKSEAENIEVKRWGDEYIPQNPKIIPHYEIGEKLGIMDFERGVKIAQSRFVALMGAGAALERAIIQFMLKRHIQVGYVEVMAPLLVNSQSLTATGQLPKFAEESFKCAADDLWLIPTSEVSTMNLYRDEILSAEQLPIYHCAFTPCFRREAGAYGKDTRGLIRLHQFNKVEMVKIVHPETSEEEHQKLVADAEAILQALKLPYRILELCSGDLGFSAAKCYDLEVWLPSSGTYREISSCSNVKDFQARRANIRFKERNKKGTQYVHALNGSGLAVGRTMAAILENYQQVDGSVKVPEVLQPYMGREFL</sequence>
<organism>
    <name type="scientific">Trichodesmium erythraeum (strain IMS101)</name>
    <dbReference type="NCBI Taxonomy" id="203124"/>
    <lineage>
        <taxon>Bacteria</taxon>
        <taxon>Bacillati</taxon>
        <taxon>Cyanobacteriota</taxon>
        <taxon>Cyanophyceae</taxon>
        <taxon>Oscillatoriophycideae</taxon>
        <taxon>Oscillatoriales</taxon>
        <taxon>Microcoleaceae</taxon>
        <taxon>Trichodesmium</taxon>
    </lineage>
</organism>